<evidence type="ECO:0000255" key="1">
    <source>
        <dbReference type="HAMAP-Rule" id="MF_02118"/>
    </source>
</evidence>
<evidence type="ECO:0000255" key="2">
    <source>
        <dbReference type="PROSITE-ProRule" id="PRU01067"/>
    </source>
</evidence>
<comment type="function">
    <text evidence="1">Catalyzes the transfer of endogenously produced octanoic acid from octanoyl-acyl-carrier-protein onto the lipoyl domain of GcvH, an intermediate carrier during protein lipoylation.</text>
</comment>
<comment type="catalytic activity">
    <reaction evidence="1">
        <text>octanoyl-[ACP] + L-lysyl-[protein] = N(6)-octanoyl-L-lysyl-[protein] + holo-[ACP] + H(+)</text>
        <dbReference type="Rhea" id="RHEA:17665"/>
        <dbReference type="Rhea" id="RHEA-COMP:9636"/>
        <dbReference type="Rhea" id="RHEA-COMP:9685"/>
        <dbReference type="Rhea" id="RHEA-COMP:9752"/>
        <dbReference type="Rhea" id="RHEA-COMP:9928"/>
        <dbReference type="ChEBI" id="CHEBI:15378"/>
        <dbReference type="ChEBI" id="CHEBI:29969"/>
        <dbReference type="ChEBI" id="CHEBI:64479"/>
        <dbReference type="ChEBI" id="CHEBI:78463"/>
        <dbReference type="ChEBI" id="CHEBI:78809"/>
        <dbReference type="EC" id="2.3.1.181"/>
    </reaction>
</comment>
<comment type="pathway">
    <text evidence="1">Protein modification; protein lipoylation via endogenous pathway; protein N(6)-(lipoyl)lysine from octanoyl-[acyl-carrier-protein].</text>
</comment>
<comment type="subunit">
    <text evidence="1">Monomer.</text>
</comment>
<comment type="miscellaneous">
    <text evidence="1">In the reaction, the free carboxyl group of octanoic acid is attached via an amide linkage to the epsilon-amino group of a specific lysine residue of lipoyl domains of lipoate-dependent enzymes. The reaction proceeds via an octanoyl-thioester enzyme intermediate.</text>
</comment>
<comment type="similarity">
    <text evidence="1">Belongs to the octanoyltransferase LipM family.</text>
</comment>
<gene>
    <name evidence="1" type="primary">lipM</name>
    <name type="ordered locus">OB1283</name>
</gene>
<organism>
    <name type="scientific">Oceanobacillus iheyensis (strain DSM 14371 / CIP 107618 / JCM 11309 / KCTC 3954 / HTE831)</name>
    <dbReference type="NCBI Taxonomy" id="221109"/>
    <lineage>
        <taxon>Bacteria</taxon>
        <taxon>Bacillati</taxon>
        <taxon>Bacillota</taxon>
        <taxon>Bacilli</taxon>
        <taxon>Bacillales</taxon>
        <taxon>Bacillaceae</taxon>
        <taxon>Oceanobacillus</taxon>
    </lineage>
</organism>
<reference key="1">
    <citation type="journal article" date="2002" name="Nucleic Acids Res.">
        <title>Genome sequence of Oceanobacillus iheyensis isolated from the Iheya Ridge and its unexpected adaptive capabilities to extreme environments.</title>
        <authorList>
            <person name="Takami H."/>
            <person name="Takaki Y."/>
            <person name="Uchiyama I."/>
        </authorList>
    </citation>
    <scope>NUCLEOTIDE SEQUENCE [LARGE SCALE GENOMIC DNA]</scope>
    <source>
        <strain>DSM 14371 / CIP 107618 / JCM 11309 / KCTC 3954 / HTE831</strain>
    </source>
</reference>
<feature type="chain" id="PRO_0000410862" description="Octanoyltransferase LipM">
    <location>
        <begin position="1"/>
        <end position="273"/>
    </location>
</feature>
<feature type="domain" description="BPL/LPL catalytic" evidence="2">
    <location>
        <begin position="32"/>
        <end position="240"/>
    </location>
</feature>
<feature type="active site" description="Acyl-thioester intermediate" evidence="1">
    <location>
        <position position="142"/>
    </location>
</feature>
<feature type="site" description="Lowers pKa of active site Cys" evidence="1">
    <location>
        <position position="157"/>
    </location>
</feature>
<proteinExistence type="inferred from homology"/>
<sequence>MREKWAFLENTPQDAAINMALDEALLHWHQKGEIPPTLRFYRWNKPTLSIGYFQKVDGKIDLQGIKKHQCQLVRRMTGGSAVLHDDELTYSIVISEKHEKVASSIRQAYFDLSKGIVRAYQLLGIEVDHAHEPSSKGRSNICFEQPAFYELVAKGKKISGNAQIRKRGILLQHGSIPLSMNVEMLFDLFQFPADQMKERKKQRFYERATTINAELGEKQSYERVRNAFQQGFSEILNIELEPITLTEEQWKEVYQIAESNYSENNIKGAVSHV</sequence>
<protein>
    <recommendedName>
        <fullName evidence="1">Octanoyltransferase LipM</fullName>
        <ecNumber evidence="1">2.3.1.181</ecNumber>
    </recommendedName>
    <alternativeName>
        <fullName evidence="1">Octanoyl-[acyl-carrier-protein]:[GcvH] N-octanoyltransferase</fullName>
    </alternativeName>
</protein>
<name>LIPM_OCEIH</name>
<keyword id="KW-0012">Acyltransferase</keyword>
<keyword id="KW-1185">Reference proteome</keyword>
<keyword id="KW-0808">Transferase</keyword>
<accession>Q8ERL9</accession>
<dbReference type="EC" id="2.3.1.181" evidence="1"/>
<dbReference type="EMBL" id="BA000028">
    <property type="protein sequence ID" value="BAC13239.1"/>
    <property type="molecule type" value="Genomic_DNA"/>
</dbReference>
<dbReference type="RefSeq" id="WP_011065687.1">
    <property type="nucleotide sequence ID" value="NC_004193.1"/>
</dbReference>
<dbReference type="SMR" id="Q8ERL9"/>
<dbReference type="STRING" id="221109.gene:10733523"/>
<dbReference type="KEGG" id="oih:OB1283"/>
<dbReference type="eggNOG" id="COG0095">
    <property type="taxonomic scope" value="Bacteria"/>
</dbReference>
<dbReference type="HOGENOM" id="CLU_022986_5_0_9"/>
<dbReference type="OrthoDB" id="9774653at2"/>
<dbReference type="PhylomeDB" id="Q8ERL9"/>
<dbReference type="Proteomes" id="UP000000822">
    <property type="component" value="Chromosome"/>
</dbReference>
<dbReference type="GO" id="GO:0033819">
    <property type="term" value="F:lipoyl(octanoyl) transferase activity"/>
    <property type="evidence" value="ECO:0007669"/>
    <property type="project" value="UniProtKB-UniRule"/>
</dbReference>
<dbReference type="GO" id="GO:0009107">
    <property type="term" value="P:lipoate biosynthetic process"/>
    <property type="evidence" value="ECO:0007669"/>
    <property type="project" value="UniProtKB-UniRule"/>
</dbReference>
<dbReference type="GO" id="GO:0036211">
    <property type="term" value="P:protein modification process"/>
    <property type="evidence" value="ECO:0007669"/>
    <property type="project" value="InterPro"/>
</dbReference>
<dbReference type="CDD" id="cd16443">
    <property type="entry name" value="LplA"/>
    <property type="match status" value="1"/>
</dbReference>
<dbReference type="Gene3D" id="3.30.930.10">
    <property type="entry name" value="Bira Bifunctional Protein, Domain 2"/>
    <property type="match status" value="1"/>
</dbReference>
<dbReference type="HAMAP" id="MF_02118">
    <property type="entry name" value="LipM"/>
    <property type="match status" value="1"/>
</dbReference>
<dbReference type="InterPro" id="IPR045864">
    <property type="entry name" value="aa-tRNA-synth_II/BPL/LPL"/>
</dbReference>
<dbReference type="InterPro" id="IPR004143">
    <property type="entry name" value="BPL_LPL_catalytic"/>
</dbReference>
<dbReference type="InterPro" id="IPR024898">
    <property type="entry name" value="LipM"/>
</dbReference>
<dbReference type="InterPro" id="IPR050664">
    <property type="entry name" value="Octanoyltrans_LipM/LipL"/>
</dbReference>
<dbReference type="PANTHER" id="PTHR43679:SF2">
    <property type="entry name" value="OCTANOYL-[GCVH]:PROTEIN N-OCTANOYLTRANSFERASE"/>
    <property type="match status" value="1"/>
</dbReference>
<dbReference type="PANTHER" id="PTHR43679">
    <property type="entry name" value="OCTANOYLTRANSFERASE LIPM-RELATED"/>
    <property type="match status" value="1"/>
</dbReference>
<dbReference type="Pfam" id="PF21948">
    <property type="entry name" value="LplA-B_cat"/>
    <property type="match status" value="1"/>
</dbReference>
<dbReference type="SUPFAM" id="SSF55681">
    <property type="entry name" value="Class II aaRS and biotin synthetases"/>
    <property type="match status" value="1"/>
</dbReference>
<dbReference type="PROSITE" id="PS51733">
    <property type="entry name" value="BPL_LPL_CATALYTIC"/>
    <property type="match status" value="1"/>
</dbReference>